<keyword id="KW-0131">Cell cycle</keyword>
<keyword id="KW-0132">Cell division</keyword>
<keyword id="KW-0175">Coiled coil</keyword>
<keyword id="KW-0963">Cytoplasm</keyword>
<keyword id="KW-0206">Cytoskeleton</keyword>
<keyword id="KW-1185">Reference proteome</keyword>
<evidence type="ECO:0000250" key="1">
    <source>
        <dbReference type="UniProtKB" id="Q96CT7"/>
    </source>
</evidence>
<evidence type="ECO:0000255" key="2"/>
<evidence type="ECO:0000256" key="3">
    <source>
        <dbReference type="SAM" id="MobiDB-lite"/>
    </source>
</evidence>
<evidence type="ECO:0000305" key="4"/>
<feature type="chain" id="PRO_0000263739" description="Coiled-coil domain-containing protein 124-A">
    <location>
        <begin position="1"/>
        <end position="217"/>
    </location>
</feature>
<feature type="region of interest" description="Disordered" evidence="3">
    <location>
        <begin position="1"/>
        <end position="128"/>
    </location>
</feature>
<feature type="coiled-coil region" evidence="2">
    <location>
        <begin position="46"/>
        <end position="82"/>
    </location>
</feature>
<feature type="compositionally biased region" description="Basic and acidic residues" evidence="3">
    <location>
        <begin position="18"/>
        <end position="45"/>
    </location>
</feature>
<feature type="compositionally biased region" description="Basic and acidic residues" evidence="3">
    <location>
        <begin position="52"/>
        <end position="74"/>
    </location>
</feature>
<feature type="compositionally biased region" description="Basic and acidic residues" evidence="3">
    <location>
        <begin position="95"/>
        <end position="128"/>
    </location>
</feature>
<name>C124A_XENLA</name>
<gene>
    <name type="primary">ccdc124-a</name>
</gene>
<organism>
    <name type="scientific">Xenopus laevis</name>
    <name type="common">African clawed frog</name>
    <dbReference type="NCBI Taxonomy" id="8355"/>
    <lineage>
        <taxon>Eukaryota</taxon>
        <taxon>Metazoa</taxon>
        <taxon>Chordata</taxon>
        <taxon>Craniata</taxon>
        <taxon>Vertebrata</taxon>
        <taxon>Euteleostomi</taxon>
        <taxon>Amphibia</taxon>
        <taxon>Batrachia</taxon>
        <taxon>Anura</taxon>
        <taxon>Pipoidea</taxon>
        <taxon>Pipidae</taxon>
        <taxon>Xenopodinae</taxon>
        <taxon>Xenopus</taxon>
        <taxon>Xenopus</taxon>
    </lineage>
</organism>
<accession>Q68EY7</accession>
<reference key="1">
    <citation type="submission" date="2004-08" db="EMBL/GenBank/DDBJ databases">
        <authorList>
            <consortium name="NIH - Xenopus Gene Collection (XGC) project"/>
        </authorList>
    </citation>
    <scope>NUCLEOTIDE SEQUENCE [LARGE SCALE MRNA]</scope>
    <source>
        <tissue>Eye</tissue>
    </source>
</reference>
<dbReference type="EMBL" id="BC080061">
    <property type="protein sequence ID" value="AAH80061.1"/>
    <property type="molecule type" value="mRNA"/>
</dbReference>
<dbReference type="RefSeq" id="NP_001087524.1">
    <property type="nucleotide sequence ID" value="NM_001094055.1"/>
</dbReference>
<dbReference type="RefSeq" id="XP_018103246.1">
    <property type="nucleotide sequence ID" value="XM_018247757.1"/>
</dbReference>
<dbReference type="RefSeq" id="XP_018103254.1">
    <property type="nucleotide sequence ID" value="XM_018247765.1"/>
</dbReference>
<dbReference type="SMR" id="Q68EY7"/>
<dbReference type="BioGRID" id="104208">
    <property type="interactions" value="1"/>
</dbReference>
<dbReference type="IntAct" id="Q68EY7">
    <property type="interactions" value="1"/>
</dbReference>
<dbReference type="DNASU" id="447348"/>
<dbReference type="GeneID" id="447348"/>
<dbReference type="KEGG" id="xla:447348"/>
<dbReference type="AGR" id="Xenbase:XB-GENE-1015203"/>
<dbReference type="CTD" id="447348"/>
<dbReference type="Xenbase" id="XB-GENE-1015203">
    <property type="gene designation" value="ccdc124.L"/>
</dbReference>
<dbReference type="OMA" id="FEERMMP"/>
<dbReference type="OrthoDB" id="76412at2759"/>
<dbReference type="Proteomes" id="UP000186698">
    <property type="component" value="Chromosome 1L"/>
</dbReference>
<dbReference type="Bgee" id="447348">
    <property type="expression patterns" value="Expressed in muscle tissue and 19 other cell types or tissues"/>
</dbReference>
<dbReference type="GO" id="GO:0005813">
    <property type="term" value="C:centrosome"/>
    <property type="evidence" value="ECO:0007669"/>
    <property type="project" value="UniProtKB-SubCell"/>
</dbReference>
<dbReference type="GO" id="GO:0005737">
    <property type="term" value="C:cytoplasm"/>
    <property type="evidence" value="ECO:0007669"/>
    <property type="project" value="UniProtKB-KW"/>
</dbReference>
<dbReference type="GO" id="GO:0030496">
    <property type="term" value="C:midbody"/>
    <property type="evidence" value="ECO:0007669"/>
    <property type="project" value="UniProtKB-SubCell"/>
</dbReference>
<dbReference type="GO" id="GO:0005634">
    <property type="term" value="C:nucleus"/>
    <property type="evidence" value="ECO:0000318"/>
    <property type="project" value="GO_Central"/>
</dbReference>
<dbReference type="GO" id="GO:0003713">
    <property type="term" value="F:transcription coactivator activity"/>
    <property type="evidence" value="ECO:0000318"/>
    <property type="project" value="GO_Central"/>
</dbReference>
<dbReference type="GO" id="GO:0051301">
    <property type="term" value="P:cell division"/>
    <property type="evidence" value="ECO:0007669"/>
    <property type="project" value="UniProtKB-KW"/>
</dbReference>
<dbReference type="GO" id="GO:0006366">
    <property type="term" value="P:transcription by RNA polymerase II"/>
    <property type="evidence" value="ECO:0000318"/>
    <property type="project" value="GO_Central"/>
</dbReference>
<dbReference type="InterPro" id="IPR010422">
    <property type="entry name" value="Ccdc124/Oxs1"/>
</dbReference>
<dbReference type="InterPro" id="IPR054414">
    <property type="entry name" value="Ccdc124/Oxs1_C"/>
</dbReference>
<dbReference type="PANTHER" id="PTHR21680">
    <property type="entry name" value="COILED-COIL DOMAIN-CONTAINING PROTEIN 124"/>
    <property type="match status" value="1"/>
</dbReference>
<dbReference type="PANTHER" id="PTHR21680:SF0">
    <property type="entry name" value="COILED-COIL DOMAIN-CONTAINING PROTEIN 124"/>
    <property type="match status" value="1"/>
</dbReference>
<dbReference type="Pfam" id="PF06244">
    <property type="entry name" value="Ccdc124"/>
    <property type="match status" value="1"/>
</dbReference>
<sequence>MPKKFQGENTKSAVARARKAEAKAVSDGKRQKEIEDAYWQDDDKHVARKGQRKEDKEKKRLEQLERKKESQRLLDEEDSKMKAKPTKPAAPSKVTRAEIEETLCKEEEHKATTEKPKTHLEMPLEENVNRRVLEEGEVEARTVEDAIAALSVGKELDRHPERRMKAAFAAFEEINMPLLKQENPNMRLSQLKHLLKKEWMKSPENPMNQQHAMYNSH</sequence>
<comment type="function">
    <text evidence="1">Ribosome-binding protein involved in ribosome hibernation: associates with translationally inactive ribosomes and stabilizes the nonrotated conformation of the 80S ribosome, thereby promoting ribosome preservation and storage.</text>
</comment>
<comment type="subunit">
    <text evidence="1">Associates with translationally inactive ribosomes in the nonrotated state.</text>
</comment>
<comment type="subcellular location">
    <subcellularLocation>
        <location evidence="1">Cytoplasm</location>
        <location evidence="1">Cytoskeleton</location>
        <location evidence="1">Microtubule organizing center</location>
        <location evidence="1">Centrosome</location>
    </subcellularLocation>
    <subcellularLocation>
        <location evidence="1">Midbody</location>
    </subcellularLocation>
    <text evidence="1">Colocalizes with gamma-tubulin at interphase, prophase, metaphase, and anaphase. Relocates from centrosome to midbody at telophase.</text>
</comment>
<comment type="similarity">
    <text evidence="4">Belongs to the CCDC124 family.</text>
</comment>
<protein>
    <recommendedName>
        <fullName>Coiled-coil domain-containing protein 124-A</fullName>
    </recommendedName>
</protein>
<proteinExistence type="evidence at transcript level"/>